<keyword id="KW-0687">Ribonucleoprotein</keyword>
<keyword id="KW-0689">Ribosomal protein</keyword>
<keyword id="KW-0694">RNA-binding</keyword>
<keyword id="KW-0699">rRNA-binding</keyword>
<proteinExistence type="inferred from homology"/>
<name>RS19_ENDTX</name>
<sequence>MSRSTKKGPYVDEKLFEKMQKLNKTGDRKVVKTWARASVITPEFVGHTIAIHNGKKFFPIFISEQMVGHKLGEFAPTRTFKGHGGMTKQETSLV</sequence>
<gene>
    <name evidence="1" type="primary">rpsS</name>
    <name type="ordered locus">TGRD_086</name>
</gene>
<evidence type="ECO:0000255" key="1">
    <source>
        <dbReference type="HAMAP-Rule" id="MF_00531"/>
    </source>
</evidence>
<evidence type="ECO:0000305" key="2"/>
<reference key="1">
    <citation type="journal article" date="2008" name="Proc. Natl. Acad. Sci. U.S.A.">
        <title>Complete genome of the uncultured termite group 1 bacteria in a single host protist cell.</title>
        <authorList>
            <person name="Hongoh Y."/>
            <person name="Sharma V.K."/>
            <person name="Prakash T."/>
            <person name="Noda S."/>
            <person name="Taylor T.D."/>
            <person name="Kudo T."/>
            <person name="Sakaki Y."/>
            <person name="Toyoda A."/>
            <person name="Hattori M."/>
            <person name="Ohkuma M."/>
        </authorList>
    </citation>
    <scope>NUCLEOTIDE SEQUENCE [LARGE SCALE GENOMIC DNA]</scope>
</reference>
<organism>
    <name type="scientific">Endomicrobium trichonymphae</name>
    <dbReference type="NCBI Taxonomy" id="1408204"/>
    <lineage>
        <taxon>Bacteria</taxon>
        <taxon>Pseudomonadati</taxon>
        <taxon>Elusimicrobiota</taxon>
        <taxon>Endomicrobiia</taxon>
        <taxon>Endomicrobiales</taxon>
        <taxon>Endomicrobiaceae</taxon>
        <taxon>Candidatus Endomicrobiellum</taxon>
    </lineage>
</organism>
<dbReference type="EMBL" id="AP009510">
    <property type="protein sequence ID" value="BAG13569.1"/>
    <property type="molecule type" value="Genomic_DNA"/>
</dbReference>
<dbReference type="RefSeq" id="WP_015423098.1">
    <property type="nucleotide sequence ID" value="NC_020419.1"/>
</dbReference>
<dbReference type="SMR" id="B1GZ87"/>
<dbReference type="STRING" id="471821.TGRD_086"/>
<dbReference type="KEGG" id="eti:RSTT_071"/>
<dbReference type="KEGG" id="rsd:TGRD_086"/>
<dbReference type="PATRIC" id="fig|471821.5.peg.130"/>
<dbReference type="HOGENOM" id="CLU_144911_0_1_0"/>
<dbReference type="OrthoDB" id="9797833at2"/>
<dbReference type="Proteomes" id="UP000001691">
    <property type="component" value="Chromosome"/>
</dbReference>
<dbReference type="GO" id="GO:0005737">
    <property type="term" value="C:cytoplasm"/>
    <property type="evidence" value="ECO:0007669"/>
    <property type="project" value="UniProtKB-ARBA"/>
</dbReference>
<dbReference type="GO" id="GO:0015935">
    <property type="term" value="C:small ribosomal subunit"/>
    <property type="evidence" value="ECO:0007669"/>
    <property type="project" value="InterPro"/>
</dbReference>
<dbReference type="GO" id="GO:0019843">
    <property type="term" value="F:rRNA binding"/>
    <property type="evidence" value="ECO:0007669"/>
    <property type="project" value="UniProtKB-UniRule"/>
</dbReference>
<dbReference type="GO" id="GO:0003735">
    <property type="term" value="F:structural constituent of ribosome"/>
    <property type="evidence" value="ECO:0007669"/>
    <property type="project" value="InterPro"/>
</dbReference>
<dbReference type="GO" id="GO:0000028">
    <property type="term" value="P:ribosomal small subunit assembly"/>
    <property type="evidence" value="ECO:0007669"/>
    <property type="project" value="TreeGrafter"/>
</dbReference>
<dbReference type="GO" id="GO:0006412">
    <property type="term" value="P:translation"/>
    <property type="evidence" value="ECO:0007669"/>
    <property type="project" value="UniProtKB-UniRule"/>
</dbReference>
<dbReference type="FunFam" id="3.30.860.10:FF:000001">
    <property type="entry name" value="30S ribosomal protein S19"/>
    <property type="match status" value="1"/>
</dbReference>
<dbReference type="Gene3D" id="3.30.860.10">
    <property type="entry name" value="30s Ribosomal Protein S19, Chain A"/>
    <property type="match status" value="1"/>
</dbReference>
<dbReference type="HAMAP" id="MF_00531">
    <property type="entry name" value="Ribosomal_uS19"/>
    <property type="match status" value="1"/>
</dbReference>
<dbReference type="InterPro" id="IPR002222">
    <property type="entry name" value="Ribosomal_uS19"/>
</dbReference>
<dbReference type="InterPro" id="IPR005732">
    <property type="entry name" value="Ribosomal_uS19_bac-type"/>
</dbReference>
<dbReference type="InterPro" id="IPR020934">
    <property type="entry name" value="Ribosomal_uS19_CS"/>
</dbReference>
<dbReference type="InterPro" id="IPR023575">
    <property type="entry name" value="Ribosomal_uS19_SF"/>
</dbReference>
<dbReference type="NCBIfam" id="TIGR01050">
    <property type="entry name" value="rpsS_bact"/>
    <property type="match status" value="1"/>
</dbReference>
<dbReference type="PANTHER" id="PTHR11880">
    <property type="entry name" value="RIBOSOMAL PROTEIN S19P FAMILY MEMBER"/>
    <property type="match status" value="1"/>
</dbReference>
<dbReference type="PANTHER" id="PTHR11880:SF8">
    <property type="entry name" value="SMALL RIBOSOMAL SUBUNIT PROTEIN US19M"/>
    <property type="match status" value="1"/>
</dbReference>
<dbReference type="Pfam" id="PF00203">
    <property type="entry name" value="Ribosomal_S19"/>
    <property type="match status" value="1"/>
</dbReference>
<dbReference type="PIRSF" id="PIRSF002144">
    <property type="entry name" value="Ribosomal_S19"/>
    <property type="match status" value="1"/>
</dbReference>
<dbReference type="PRINTS" id="PR00975">
    <property type="entry name" value="RIBOSOMALS19"/>
</dbReference>
<dbReference type="SUPFAM" id="SSF54570">
    <property type="entry name" value="Ribosomal protein S19"/>
    <property type="match status" value="1"/>
</dbReference>
<dbReference type="PROSITE" id="PS00323">
    <property type="entry name" value="RIBOSOMAL_S19"/>
    <property type="match status" value="1"/>
</dbReference>
<comment type="function">
    <text evidence="1">Protein S19 forms a complex with S13 that binds strongly to the 16S ribosomal RNA.</text>
</comment>
<comment type="similarity">
    <text evidence="1">Belongs to the universal ribosomal protein uS19 family.</text>
</comment>
<protein>
    <recommendedName>
        <fullName evidence="1">Small ribosomal subunit protein uS19</fullName>
    </recommendedName>
    <alternativeName>
        <fullName evidence="2">30S ribosomal protein S19</fullName>
    </alternativeName>
</protein>
<accession>B1GZ87</accession>
<feature type="chain" id="PRO_1000128054" description="Small ribosomal subunit protein uS19">
    <location>
        <begin position="1"/>
        <end position="94"/>
    </location>
</feature>